<name>RL24_STAAT</name>
<accession>A8Z346</accession>
<keyword id="KW-0687">Ribonucleoprotein</keyword>
<keyword id="KW-0689">Ribosomal protein</keyword>
<keyword id="KW-0694">RNA-binding</keyword>
<keyword id="KW-0699">rRNA-binding</keyword>
<sequence length="105" mass="11536">MHIKKGDNVKVIAGKDKGKEGKVIATLPKKDRVVVEGVNIMKKHQKPTQLNPEGGILETEAAIHVSNVQLLDPKTNEPTRVGYKFVDGKKVRIAKKSGEEIKSNN</sequence>
<comment type="function">
    <text evidence="1">One of two assembly initiator proteins, it binds directly to the 5'-end of the 23S rRNA, where it nucleates assembly of the 50S subunit.</text>
</comment>
<comment type="function">
    <text evidence="1">One of the proteins that surrounds the polypeptide exit tunnel on the outside of the subunit.</text>
</comment>
<comment type="subunit">
    <text evidence="1">Part of the 50S ribosomal subunit.</text>
</comment>
<comment type="similarity">
    <text evidence="1">Belongs to the universal ribosomal protein uL24 family.</text>
</comment>
<reference key="1">
    <citation type="journal article" date="2007" name="BMC Microbiol.">
        <title>Subtle genetic changes enhance virulence of methicillin resistant and sensitive Staphylococcus aureus.</title>
        <authorList>
            <person name="Highlander S.K."/>
            <person name="Hulten K.G."/>
            <person name="Qin X."/>
            <person name="Jiang H."/>
            <person name="Yerrapragada S."/>
            <person name="Mason E.O. Jr."/>
            <person name="Shang Y."/>
            <person name="Williams T.M."/>
            <person name="Fortunov R.M."/>
            <person name="Liu Y."/>
            <person name="Igboeli O."/>
            <person name="Petrosino J."/>
            <person name="Tirumalai M."/>
            <person name="Uzman A."/>
            <person name="Fox G.E."/>
            <person name="Cardenas A.M."/>
            <person name="Muzny D.M."/>
            <person name="Hemphill L."/>
            <person name="Ding Y."/>
            <person name="Dugan S."/>
            <person name="Blyth P.R."/>
            <person name="Buhay C.J."/>
            <person name="Dinh H.H."/>
            <person name="Hawes A.C."/>
            <person name="Holder M."/>
            <person name="Kovar C.L."/>
            <person name="Lee S.L."/>
            <person name="Liu W."/>
            <person name="Nazareth L.V."/>
            <person name="Wang Q."/>
            <person name="Zhou J."/>
            <person name="Kaplan S.L."/>
            <person name="Weinstock G.M."/>
        </authorList>
    </citation>
    <scope>NUCLEOTIDE SEQUENCE [LARGE SCALE GENOMIC DNA]</scope>
    <source>
        <strain>USA300 / TCH1516</strain>
    </source>
</reference>
<gene>
    <name evidence="1" type="primary">rplX</name>
    <name type="ordered locus">USA300HOU_2230</name>
</gene>
<evidence type="ECO:0000255" key="1">
    <source>
        <dbReference type="HAMAP-Rule" id="MF_01326"/>
    </source>
</evidence>
<evidence type="ECO:0000305" key="2"/>
<organism>
    <name type="scientific">Staphylococcus aureus (strain USA300 / TCH1516)</name>
    <dbReference type="NCBI Taxonomy" id="451516"/>
    <lineage>
        <taxon>Bacteria</taxon>
        <taxon>Bacillati</taxon>
        <taxon>Bacillota</taxon>
        <taxon>Bacilli</taxon>
        <taxon>Bacillales</taxon>
        <taxon>Staphylococcaceae</taxon>
        <taxon>Staphylococcus</taxon>
    </lineage>
</organism>
<protein>
    <recommendedName>
        <fullName evidence="1">Large ribosomal subunit protein uL24</fullName>
    </recommendedName>
    <alternativeName>
        <fullName evidence="2">50S ribosomal protein L24</fullName>
    </alternativeName>
</protein>
<dbReference type="EMBL" id="CP000730">
    <property type="protein sequence ID" value="ABX30223.1"/>
    <property type="molecule type" value="Genomic_DNA"/>
</dbReference>
<dbReference type="RefSeq" id="WP_000547687.1">
    <property type="nucleotide sequence ID" value="NC_010079.1"/>
</dbReference>
<dbReference type="SMR" id="A8Z346"/>
<dbReference type="KEGG" id="sax:USA300HOU_2230"/>
<dbReference type="HOGENOM" id="CLU_093315_2_0_9"/>
<dbReference type="GO" id="GO:1990904">
    <property type="term" value="C:ribonucleoprotein complex"/>
    <property type="evidence" value="ECO:0007669"/>
    <property type="project" value="UniProtKB-KW"/>
</dbReference>
<dbReference type="GO" id="GO:0005840">
    <property type="term" value="C:ribosome"/>
    <property type="evidence" value="ECO:0007669"/>
    <property type="project" value="UniProtKB-KW"/>
</dbReference>
<dbReference type="GO" id="GO:0019843">
    <property type="term" value="F:rRNA binding"/>
    <property type="evidence" value="ECO:0007669"/>
    <property type="project" value="UniProtKB-UniRule"/>
</dbReference>
<dbReference type="GO" id="GO:0003735">
    <property type="term" value="F:structural constituent of ribosome"/>
    <property type="evidence" value="ECO:0007669"/>
    <property type="project" value="InterPro"/>
</dbReference>
<dbReference type="GO" id="GO:0006412">
    <property type="term" value="P:translation"/>
    <property type="evidence" value="ECO:0007669"/>
    <property type="project" value="UniProtKB-UniRule"/>
</dbReference>
<dbReference type="CDD" id="cd06089">
    <property type="entry name" value="KOW_RPL26"/>
    <property type="match status" value="1"/>
</dbReference>
<dbReference type="FunFam" id="2.30.30.30:FF:000004">
    <property type="entry name" value="50S ribosomal protein L24"/>
    <property type="match status" value="1"/>
</dbReference>
<dbReference type="Gene3D" id="2.30.30.30">
    <property type="match status" value="1"/>
</dbReference>
<dbReference type="HAMAP" id="MF_01326_B">
    <property type="entry name" value="Ribosomal_uL24_B"/>
    <property type="match status" value="1"/>
</dbReference>
<dbReference type="InterPro" id="IPR005824">
    <property type="entry name" value="KOW"/>
</dbReference>
<dbReference type="InterPro" id="IPR014722">
    <property type="entry name" value="Rib_uL2_dom2"/>
</dbReference>
<dbReference type="InterPro" id="IPR003256">
    <property type="entry name" value="Ribosomal_uL24"/>
</dbReference>
<dbReference type="InterPro" id="IPR005825">
    <property type="entry name" value="Ribosomal_uL24_CS"/>
</dbReference>
<dbReference type="InterPro" id="IPR041988">
    <property type="entry name" value="Ribosomal_uL24_KOW"/>
</dbReference>
<dbReference type="InterPro" id="IPR008991">
    <property type="entry name" value="Translation_prot_SH3-like_sf"/>
</dbReference>
<dbReference type="NCBIfam" id="TIGR01079">
    <property type="entry name" value="rplX_bact"/>
    <property type="match status" value="1"/>
</dbReference>
<dbReference type="PANTHER" id="PTHR12903">
    <property type="entry name" value="MITOCHONDRIAL RIBOSOMAL PROTEIN L24"/>
    <property type="match status" value="1"/>
</dbReference>
<dbReference type="Pfam" id="PF00467">
    <property type="entry name" value="KOW"/>
    <property type="match status" value="1"/>
</dbReference>
<dbReference type="Pfam" id="PF17136">
    <property type="entry name" value="ribosomal_L24"/>
    <property type="match status" value="1"/>
</dbReference>
<dbReference type="SMART" id="SM00739">
    <property type="entry name" value="KOW"/>
    <property type="match status" value="1"/>
</dbReference>
<dbReference type="SUPFAM" id="SSF50104">
    <property type="entry name" value="Translation proteins SH3-like domain"/>
    <property type="match status" value="1"/>
</dbReference>
<dbReference type="PROSITE" id="PS01108">
    <property type="entry name" value="RIBOSOMAL_L24"/>
    <property type="match status" value="1"/>
</dbReference>
<proteinExistence type="inferred from homology"/>
<feature type="chain" id="PRO_1000086501" description="Large ribosomal subunit protein uL24">
    <location>
        <begin position="1"/>
        <end position="105"/>
    </location>
</feature>